<comment type="function">
    <text evidence="1">Binds 16S rRNA, required for the assembly of 30S particles and may also be responsible for determining the conformation of the 16S rRNA at the A site.</text>
</comment>
<comment type="subunit">
    <text evidence="1">Part of the 30S ribosomal subunit. Contacts proteins S3 and S10.</text>
</comment>
<comment type="similarity">
    <text evidence="1">Belongs to the universal ribosomal protein uS14 family.</text>
</comment>
<reference key="1">
    <citation type="journal article" date="2006" name="J. Bacteriol.">
        <title>Comparative genomic analysis of three strains of Ehrlichia ruminantium reveals an active process of genome size plasticity.</title>
        <authorList>
            <person name="Frutos R."/>
            <person name="Viari A."/>
            <person name="Ferraz C."/>
            <person name="Morgat A."/>
            <person name="Eychenie S."/>
            <person name="Kandassamy Y."/>
            <person name="Chantal I."/>
            <person name="Bensaid A."/>
            <person name="Coissac E."/>
            <person name="Vachiery N."/>
            <person name="Demaille J."/>
            <person name="Martinez D."/>
        </authorList>
    </citation>
    <scope>NUCLEOTIDE SEQUENCE [LARGE SCALE GENOMIC DNA]</scope>
    <source>
        <strain>Gardel</strain>
    </source>
</reference>
<sequence>MMSRKSVIQRNLKRISICDRLKSKREKLRAIIKDQSISMNDRFLAQVKLSKLPRDSSYIRIRNRCLITGRPRGCYRKFKVSRIVLRQLGSIGQIPGLTKSSW</sequence>
<accession>Q5FFV3</accession>
<name>RS14_EHRRG</name>
<gene>
    <name evidence="1" type="primary">rpsN</name>
    <name type="ordered locus">ERGA_CDS_06160</name>
</gene>
<keyword id="KW-0687">Ribonucleoprotein</keyword>
<keyword id="KW-0689">Ribosomal protein</keyword>
<keyword id="KW-0694">RNA-binding</keyword>
<keyword id="KW-0699">rRNA-binding</keyword>
<protein>
    <recommendedName>
        <fullName evidence="1">Small ribosomal subunit protein uS14</fullName>
    </recommendedName>
    <alternativeName>
        <fullName evidence="2">30S ribosomal protein S14</fullName>
    </alternativeName>
</protein>
<proteinExistence type="inferred from homology"/>
<feature type="chain" id="PRO_0000354381" description="Small ribosomal subunit protein uS14">
    <location>
        <begin position="1"/>
        <end position="102"/>
    </location>
</feature>
<dbReference type="EMBL" id="CR925677">
    <property type="protein sequence ID" value="CAI28068.1"/>
    <property type="molecule type" value="Genomic_DNA"/>
</dbReference>
<dbReference type="SMR" id="Q5FFV3"/>
<dbReference type="KEGG" id="erg:ERGA_CDS_06160"/>
<dbReference type="HOGENOM" id="CLU_139869_0_1_5"/>
<dbReference type="Proteomes" id="UP000000533">
    <property type="component" value="Chromosome"/>
</dbReference>
<dbReference type="GO" id="GO:0005737">
    <property type="term" value="C:cytoplasm"/>
    <property type="evidence" value="ECO:0007669"/>
    <property type="project" value="UniProtKB-ARBA"/>
</dbReference>
<dbReference type="GO" id="GO:0015935">
    <property type="term" value="C:small ribosomal subunit"/>
    <property type="evidence" value="ECO:0007669"/>
    <property type="project" value="TreeGrafter"/>
</dbReference>
<dbReference type="GO" id="GO:0019843">
    <property type="term" value="F:rRNA binding"/>
    <property type="evidence" value="ECO:0007669"/>
    <property type="project" value="UniProtKB-UniRule"/>
</dbReference>
<dbReference type="GO" id="GO:0003735">
    <property type="term" value="F:structural constituent of ribosome"/>
    <property type="evidence" value="ECO:0007669"/>
    <property type="project" value="InterPro"/>
</dbReference>
<dbReference type="GO" id="GO:0006412">
    <property type="term" value="P:translation"/>
    <property type="evidence" value="ECO:0007669"/>
    <property type="project" value="UniProtKB-UniRule"/>
</dbReference>
<dbReference type="FunFam" id="1.10.287.1480:FF:000001">
    <property type="entry name" value="30S ribosomal protein S14"/>
    <property type="match status" value="1"/>
</dbReference>
<dbReference type="Gene3D" id="1.10.287.1480">
    <property type="match status" value="1"/>
</dbReference>
<dbReference type="HAMAP" id="MF_00537">
    <property type="entry name" value="Ribosomal_uS14_1"/>
    <property type="match status" value="1"/>
</dbReference>
<dbReference type="InterPro" id="IPR001209">
    <property type="entry name" value="Ribosomal_uS14"/>
</dbReference>
<dbReference type="InterPro" id="IPR023036">
    <property type="entry name" value="Ribosomal_uS14_bac/plastid"/>
</dbReference>
<dbReference type="InterPro" id="IPR018271">
    <property type="entry name" value="Ribosomal_uS14_CS"/>
</dbReference>
<dbReference type="NCBIfam" id="NF006477">
    <property type="entry name" value="PRK08881.1"/>
    <property type="match status" value="1"/>
</dbReference>
<dbReference type="PANTHER" id="PTHR19836">
    <property type="entry name" value="30S RIBOSOMAL PROTEIN S14"/>
    <property type="match status" value="1"/>
</dbReference>
<dbReference type="PANTHER" id="PTHR19836:SF19">
    <property type="entry name" value="SMALL RIBOSOMAL SUBUNIT PROTEIN US14M"/>
    <property type="match status" value="1"/>
</dbReference>
<dbReference type="Pfam" id="PF00253">
    <property type="entry name" value="Ribosomal_S14"/>
    <property type="match status" value="1"/>
</dbReference>
<dbReference type="SUPFAM" id="SSF57716">
    <property type="entry name" value="Glucocorticoid receptor-like (DNA-binding domain)"/>
    <property type="match status" value="1"/>
</dbReference>
<dbReference type="PROSITE" id="PS00527">
    <property type="entry name" value="RIBOSOMAL_S14"/>
    <property type="match status" value="1"/>
</dbReference>
<evidence type="ECO:0000255" key="1">
    <source>
        <dbReference type="HAMAP-Rule" id="MF_00537"/>
    </source>
</evidence>
<evidence type="ECO:0000305" key="2"/>
<organism>
    <name type="scientific">Ehrlichia ruminantium (strain Gardel)</name>
    <dbReference type="NCBI Taxonomy" id="302409"/>
    <lineage>
        <taxon>Bacteria</taxon>
        <taxon>Pseudomonadati</taxon>
        <taxon>Pseudomonadota</taxon>
        <taxon>Alphaproteobacteria</taxon>
        <taxon>Rickettsiales</taxon>
        <taxon>Anaplasmataceae</taxon>
        <taxon>Ehrlichia</taxon>
    </lineage>
</organism>